<name>PERE_MOUSE</name>
<sequence>MMQQLLALVGALATLILTQHAEGTAPASPSPVEISVLRDCIAEAKLLVDTAYNHTQKSIMQRLRSGSASPMDLLAYFKQPVAATRRVVQAADYMHVALGLLEERLQPRGSRPFNATDVLTEPQLRLLSQASGCALQDQAERCSNKYRTITGRCNNKKHPWLGASNQALARWLPAEYEDHRSLPFGWTPGKRRNGFLLPLVRDVSNQIVRFPSKKLTSDRGRALMFMQWGQFIDHDLDFSPESPARVAFSMGVDCEKTCAQLPPCFPIKIPRNDPRIKNQRDCIPFFRSAPACPQNRNKVRNQINALTSFVDASMVYGSEVTLALRLRNRTNFLGLLATNQRFQDNGRALLPFDNLHEDPCLLTNRSARIPCFLAGDTRSSETPKLTALHTLFVREHNRLAAELRRLNPHWSGDKLYNEARKIVGAMVQIITYRDFLPLVLGRARIRRTLGPYRGYCSNVDPRVANVFTLAFRFGHTMLQPFMFRLDSQYRASAPNSHVPLSSVFFASWRIIHEGGIDPILRGLMATPAKLNRQDSMLVDELRDKLFQQVRRIGLDLAALNMQRSRDHGLPGYNAWRRFCGLSQPRNLAQLSRVLKNQDLARKFLRLYKTPDNIDIWVGAIAEPLLPGARVGPLLACLFENQFRRARDGDRFWWQKWGVFTKRQRKALRRISLSRIVCDNTGITTVSRDIFRANIYPQGFVSCSRIPKLNLSAWRGK</sequence>
<proteinExistence type="evidence at protein level"/>
<accession>P49290</accession>
<accession>Q5SW51</accession>
<accession>Q61798</accession>
<dbReference type="EC" id="1.11.1.7"/>
<dbReference type="EMBL" id="D78353">
    <property type="protein sequence ID" value="BAA11370.1"/>
    <property type="molecule type" value="mRNA"/>
</dbReference>
<dbReference type="EMBL" id="L77979">
    <property type="protein sequence ID" value="AAB40403.1"/>
    <property type="status" value="ALT_INIT"/>
    <property type="molecule type" value="mRNA"/>
</dbReference>
<dbReference type="EMBL" id="AL606805">
    <property type="status" value="NOT_ANNOTATED_CDS"/>
    <property type="molecule type" value="Genomic_DNA"/>
</dbReference>
<dbReference type="CCDS" id="CCDS25220.1"/>
<dbReference type="RefSeq" id="NP_031972.2">
    <property type="nucleotide sequence ID" value="NM_007946.3"/>
</dbReference>
<dbReference type="SMR" id="P49290"/>
<dbReference type="BioGRID" id="199492">
    <property type="interactions" value="2"/>
</dbReference>
<dbReference type="FunCoup" id="P49290">
    <property type="interactions" value="204"/>
</dbReference>
<dbReference type="STRING" id="10090.ENSMUSP00000050497"/>
<dbReference type="ChEMBL" id="CHEMBL4295770"/>
<dbReference type="PeroxiBase" id="3346">
    <property type="entry name" value="MmEPO"/>
</dbReference>
<dbReference type="CarbonylDB" id="P49290"/>
<dbReference type="GlyCosmos" id="P49290">
    <property type="glycosylation" value="5 sites, No reported glycans"/>
</dbReference>
<dbReference type="GlyGen" id="P49290">
    <property type="glycosylation" value="6 sites, 1 N-linked glycan (1 site)"/>
</dbReference>
<dbReference type="iPTMnet" id="P49290"/>
<dbReference type="PhosphoSitePlus" id="P49290"/>
<dbReference type="CPTAC" id="non-CPTAC-3488"/>
<dbReference type="jPOST" id="P49290"/>
<dbReference type="PaxDb" id="10090-ENSMUSP00000050497"/>
<dbReference type="ProteomicsDB" id="289349"/>
<dbReference type="Antibodypedia" id="30927">
    <property type="antibodies" value="384 antibodies from 28 providers"/>
</dbReference>
<dbReference type="DNASU" id="13861"/>
<dbReference type="Ensembl" id="ENSMUST00000049768.4">
    <property type="protein sequence ID" value="ENSMUSP00000050497.4"/>
    <property type="gene ID" value="ENSMUSG00000052234.3"/>
</dbReference>
<dbReference type="GeneID" id="13861"/>
<dbReference type="KEGG" id="mmu:13861"/>
<dbReference type="UCSC" id="uc007kuw.1">
    <property type="organism name" value="mouse"/>
</dbReference>
<dbReference type="AGR" id="MGI:107569"/>
<dbReference type="CTD" id="8288"/>
<dbReference type="MGI" id="MGI:107569">
    <property type="gene designation" value="Epx"/>
</dbReference>
<dbReference type="VEuPathDB" id="HostDB:ENSMUSG00000052234"/>
<dbReference type="eggNOG" id="KOG2408">
    <property type="taxonomic scope" value="Eukaryota"/>
</dbReference>
<dbReference type="GeneTree" id="ENSGT00940000156009"/>
<dbReference type="HOGENOM" id="CLU_006087_1_1_1"/>
<dbReference type="InParanoid" id="P49290"/>
<dbReference type="OMA" id="PRWNGDK"/>
<dbReference type="OrthoDB" id="823504at2759"/>
<dbReference type="PhylomeDB" id="P49290"/>
<dbReference type="TreeFam" id="TF314316"/>
<dbReference type="Reactome" id="R-MMU-6798695">
    <property type="pathway name" value="Neutrophil degranulation"/>
</dbReference>
<dbReference type="BioGRID-ORCS" id="13861">
    <property type="hits" value="0 hits in 78 CRISPR screens"/>
</dbReference>
<dbReference type="PRO" id="PR:P49290"/>
<dbReference type="Proteomes" id="UP000000589">
    <property type="component" value="Chromosome 11"/>
</dbReference>
<dbReference type="RNAct" id="P49290">
    <property type="molecule type" value="protein"/>
</dbReference>
<dbReference type="Bgee" id="ENSMUSG00000052234">
    <property type="expression patterns" value="Expressed in femorotibial joint and 18 other cell types or tissues"/>
</dbReference>
<dbReference type="GO" id="GO:0020037">
    <property type="term" value="F:heme binding"/>
    <property type="evidence" value="ECO:0007669"/>
    <property type="project" value="InterPro"/>
</dbReference>
<dbReference type="GO" id="GO:0140825">
    <property type="term" value="F:lactoperoxidase activity"/>
    <property type="evidence" value="ECO:0007669"/>
    <property type="project" value="UniProtKB-EC"/>
</dbReference>
<dbReference type="GO" id="GO:0046872">
    <property type="term" value="F:metal ion binding"/>
    <property type="evidence" value="ECO:0007669"/>
    <property type="project" value="UniProtKB-KW"/>
</dbReference>
<dbReference type="GO" id="GO:0004601">
    <property type="term" value="F:peroxidase activity"/>
    <property type="evidence" value="ECO:0000314"/>
    <property type="project" value="MGI"/>
</dbReference>
<dbReference type="GO" id="GO:0002215">
    <property type="term" value="P:defense response to nematode"/>
    <property type="evidence" value="ECO:0000315"/>
    <property type="project" value="MGI"/>
</dbReference>
<dbReference type="GO" id="GO:0072677">
    <property type="term" value="P:eosinophil migration"/>
    <property type="evidence" value="ECO:0000315"/>
    <property type="project" value="MGI"/>
</dbReference>
<dbReference type="GO" id="GO:0042744">
    <property type="term" value="P:hydrogen peroxide catabolic process"/>
    <property type="evidence" value="ECO:0007669"/>
    <property type="project" value="UniProtKB-KW"/>
</dbReference>
<dbReference type="GO" id="GO:0032693">
    <property type="term" value="P:negative regulation of interleukin-10 production"/>
    <property type="evidence" value="ECO:0000315"/>
    <property type="project" value="MGI"/>
</dbReference>
<dbReference type="GO" id="GO:0032714">
    <property type="term" value="P:negative regulation of interleukin-5 production"/>
    <property type="evidence" value="ECO:0000315"/>
    <property type="project" value="MGI"/>
</dbReference>
<dbReference type="GO" id="GO:0010936">
    <property type="term" value="P:negative regulation of macrophage cytokine production"/>
    <property type="evidence" value="ECO:0000315"/>
    <property type="project" value="MGI"/>
</dbReference>
<dbReference type="GO" id="GO:0032753">
    <property type="term" value="P:positive regulation of interleukin-4 production"/>
    <property type="evidence" value="ECO:0000315"/>
    <property type="project" value="MGI"/>
</dbReference>
<dbReference type="GO" id="GO:0006979">
    <property type="term" value="P:response to oxidative stress"/>
    <property type="evidence" value="ECO:0007669"/>
    <property type="project" value="InterPro"/>
</dbReference>
<dbReference type="CDD" id="cd09824">
    <property type="entry name" value="myeloperoxidase_like"/>
    <property type="match status" value="1"/>
</dbReference>
<dbReference type="FunFam" id="1.10.640.10:FF:000001">
    <property type="entry name" value="Peroxidasin homolog"/>
    <property type="match status" value="1"/>
</dbReference>
<dbReference type="Gene3D" id="1.10.640.10">
    <property type="entry name" value="Haem peroxidase domain superfamily, animal type"/>
    <property type="match status" value="1"/>
</dbReference>
<dbReference type="InterPro" id="IPR019791">
    <property type="entry name" value="Haem_peroxidase_animal"/>
</dbReference>
<dbReference type="InterPro" id="IPR010255">
    <property type="entry name" value="Haem_peroxidase_sf"/>
</dbReference>
<dbReference type="InterPro" id="IPR037120">
    <property type="entry name" value="Haem_peroxidase_sf_animal"/>
</dbReference>
<dbReference type="PANTHER" id="PTHR11475:SF63">
    <property type="entry name" value="EOSINOPHIL PEROXIDASE"/>
    <property type="match status" value="1"/>
</dbReference>
<dbReference type="PANTHER" id="PTHR11475">
    <property type="entry name" value="OXIDASE/PEROXIDASE"/>
    <property type="match status" value="1"/>
</dbReference>
<dbReference type="Pfam" id="PF03098">
    <property type="entry name" value="An_peroxidase"/>
    <property type="match status" value="1"/>
</dbReference>
<dbReference type="PRINTS" id="PR00457">
    <property type="entry name" value="ANPEROXIDASE"/>
</dbReference>
<dbReference type="SUPFAM" id="SSF48113">
    <property type="entry name" value="Heme-dependent peroxidases"/>
    <property type="match status" value="1"/>
</dbReference>
<dbReference type="PROSITE" id="PS00435">
    <property type="entry name" value="PEROXIDASE_1"/>
    <property type="match status" value="1"/>
</dbReference>
<dbReference type="PROSITE" id="PS50292">
    <property type="entry name" value="PEROXIDASE_3"/>
    <property type="match status" value="1"/>
</dbReference>
<gene>
    <name type="primary">Epx</name>
    <name type="synonym">Eper</name>
</gene>
<organism>
    <name type="scientific">Mus musculus</name>
    <name type="common">Mouse</name>
    <dbReference type="NCBI Taxonomy" id="10090"/>
    <lineage>
        <taxon>Eukaryota</taxon>
        <taxon>Metazoa</taxon>
        <taxon>Chordata</taxon>
        <taxon>Craniata</taxon>
        <taxon>Vertebrata</taxon>
        <taxon>Euteleostomi</taxon>
        <taxon>Mammalia</taxon>
        <taxon>Eutheria</taxon>
        <taxon>Euarchontoglires</taxon>
        <taxon>Glires</taxon>
        <taxon>Rodentia</taxon>
        <taxon>Myomorpha</taxon>
        <taxon>Muroidea</taxon>
        <taxon>Muridae</taxon>
        <taxon>Murinae</taxon>
        <taxon>Mus</taxon>
        <taxon>Mus</taxon>
    </lineage>
</organism>
<protein>
    <recommendedName>
        <fullName>Eosinophil peroxidase</fullName>
        <shortName>EPO</shortName>
        <ecNumber>1.11.1.7</ecNumber>
    </recommendedName>
    <component>
        <recommendedName>
            <fullName>Eosinophil peroxidase light chain</fullName>
        </recommendedName>
    </component>
    <component>
        <recommendedName>
            <fullName>Eosinophil peroxidase heavy chain</fullName>
        </recommendedName>
    </component>
</protein>
<keyword id="KW-0106">Calcium</keyword>
<keyword id="KW-1015">Disulfide bond</keyword>
<keyword id="KW-0325">Glycoprotein</keyword>
<keyword id="KW-0349">Heme</keyword>
<keyword id="KW-0376">Hydrogen peroxide</keyword>
<keyword id="KW-0408">Iron</keyword>
<keyword id="KW-0479">Metal-binding</keyword>
<keyword id="KW-0944">Nitration</keyword>
<keyword id="KW-0560">Oxidoreductase</keyword>
<keyword id="KW-0575">Peroxidase</keyword>
<keyword id="KW-1185">Reference proteome</keyword>
<keyword id="KW-0732">Signal</keyword>
<feature type="signal peptide" evidence="3">
    <location>
        <begin position="1"/>
        <end position="18"/>
    </location>
</feature>
<feature type="propeptide" id="PRO_0000023642" evidence="3">
    <location>
        <begin position="19"/>
        <end position="140"/>
    </location>
</feature>
<feature type="chain" id="PRO_0000023643" description="Eosinophil peroxidase light chain">
    <location>
        <begin position="141"/>
        <end position="251"/>
    </location>
</feature>
<feature type="chain" id="PRO_0000023644" description="Eosinophil peroxidase heavy chain">
    <location>
        <begin position="252"/>
        <end position="716"/>
    </location>
</feature>
<feature type="active site" description="Proton acceptor" evidence="4">
    <location>
        <position position="234"/>
    </location>
</feature>
<feature type="binding site" description="covalent" evidence="1">
    <location>
        <position position="233"/>
    </location>
    <ligand>
        <name>heme b</name>
        <dbReference type="ChEBI" id="CHEBI:60344"/>
    </ligand>
</feature>
<feature type="binding site" evidence="4">
    <location>
        <position position="235"/>
    </location>
    <ligand>
        <name>Ca(2+)</name>
        <dbReference type="ChEBI" id="CHEBI:29108"/>
    </ligand>
</feature>
<feature type="binding site" evidence="4">
    <location>
        <position position="307"/>
    </location>
    <ligand>
        <name>Ca(2+)</name>
        <dbReference type="ChEBI" id="CHEBI:29108"/>
    </ligand>
</feature>
<feature type="binding site" evidence="4">
    <location>
        <position position="309"/>
    </location>
    <ligand>
        <name>Ca(2+)</name>
        <dbReference type="ChEBI" id="CHEBI:29108"/>
    </ligand>
</feature>
<feature type="binding site" evidence="4">
    <location>
        <position position="311"/>
    </location>
    <ligand>
        <name>Ca(2+)</name>
        <dbReference type="ChEBI" id="CHEBI:29108"/>
    </ligand>
</feature>
<feature type="binding site" evidence="4">
    <location>
        <position position="313"/>
    </location>
    <ligand>
        <name>Ca(2+)</name>
        <dbReference type="ChEBI" id="CHEBI:29108"/>
    </ligand>
</feature>
<feature type="binding site" description="covalent" evidence="1">
    <location>
        <position position="381"/>
    </location>
    <ligand>
        <name>heme b</name>
        <dbReference type="ChEBI" id="CHEBI:60344"/>
    </ligand>
</feature>
<feature type="binding site" description="axial binding residue" evidence="4">
    <location>
        <position position="475"/>
    </location>
    <ligand>
        <name>heme b</name>
        <dbReference type="ChEBI" id="CHEBI:60344"/>
    </ligand>
    <ligandPart>
        <name>Fe</name>
        <dbReference type="ChEBI" id="CHEBI:18248"/>
    </ligandPart>
</feature>
<feature type="site" description="Transition state stabilizer" evidence="4">
    <location>
        <position position="378"/>
    </location>
</feature>
<feature type="modified residue" description="3'-nitrotyrosine" evidence="2">
    <location>
        <position position="489"/>
    </location>
</feature>
<feature type="glycosylation site" description="N-linked (GlcNAc...) asparagine" evidence="3">
    <location>
        <position position="53"/>
    </location>
</feature>
<feature type="glycosylation site" description="N-linked (GlcNAc...) asparagine" evidence="3">
    <location>
        <position position="114"/>
    </location>
</feature>
<feature type="glycosylation site" description="N-linked (GlcNAc...) asparagine" evidence="3">
    <location>
        <position position="328"/>
    </location>
</feature>
<feature type="glycosylation site" description="N-linked (GlcNAc...) asparagine" evidence="3">
    <location>
        <position position="364"/>
    </location>
</feature>
<feature type="glycosylation site" description="N-linked (GlcNAc...) asparagine" evidence="3">
    <location>
        <position position="709"/>
    </location>
</feature>
<feature type="disulfide bond" evidence="4">
    <location>
        <begin position="142"/>
        <end position="153"/>
    </location>
</feature>
<feature type="disulfide bond" evidence="4">
    <location>
        <begin position="254"/>
        <end position="264"/>
    </location>
</feature>
<feature type="disulfide bond" evidence="4">
    <location>
        <begin position="258"/>
        <end position="282"/>
    </location>
</feature>
<feature type="disulfide bond" evidence="4">
    <location>
        <begin position="360"/>
        <end position="371"/>
    </location>
</feature>
<feature type="disulfide bond" evidence="4">
    <location>
        <begin position="579"/>
        <end position="636"/>
    </location>
</feature>
<feature type="disulfide bond" evidence="4">
    <location>
        <begin position="677"/>
        <end position="702"/>
    </location>
</feature>
<feature type="sequence conflict" description="In Ref. 2; AAB40403." evidence="6" ref="2">
    <original>A</original>
    <variation>P</variation>
    <location>
        <position position="167"/>
    </location>
</feature>
<feature type="sequence conflict" description="In Ref. 2; AAB40403." evidence="6" ref="2">
    <original>A</original>
    <variation>P</variation>
    <location>
        <position position="400"/>
    </location>
</feature>
<feature type="sequence conflict" description="In Ref. 1; BAA11370." evidence="6" ref="1">
    <original>M</original>
    <variation>K</variation>
    <location>
        <position position="524"/>
    </location>
</feature>
<feature type="sequence conflict" description="In Ref. 1; BAA11370." evidence="6" ref="1">
    <original>N</original>
    <variation>Y</variation>
    <location>
        <position position="531"/>
    </location>
</feature>
<evidence type="ECO:0000250" key="1"/>
<evidence type="ECO:0000250" key="2">
    <source>
        <dbReference type="UniProtKB" id="P11678"/>
    </source>
</evidence>
<evidence type="ECO:0000255" key="3"/>
<evidence type="ECO:0000255" key="4">
    <source>
        <dbReference type="PROSITE-ProRule" id="PRU00298"/>
    </source>
</evidence>
<evidence type="ECO:0000269" key="5">
    <source>
    </source>
</evidence>
<evidence type="ECO:0000305" key="6"/>
<reference key="1">
    <citation type="submission" date="1995-11" db="EMBL/GenBank/DDBJ databases">
        <authorList>
            <person name="Ohmori J."/>
            <person name="Itoh H."/>
            <person name="Tomita M."/>
            <person name="Nawa Y."/>
        </authorList>
    </citation>
    <scope>NUCLEOTIDE SEQUENCE [MRNA]</scope>
    <source>
        <strain>C57BL/6J</strain>
    </source>
</reference>
<reference key="2">
    <citation type="journal article" date="1996" name="J. Leukoc. Biol.">
        <title>Cloning of the murine eosinophil peroxidase gene (mEPO): characterization of a conserved subgroup of mammalian hematopoietic peroxidases.</title>
        <authorList>
            <person name="Horton M.A."/>
            <person name="Larson K.A."/>
            <person name="Lee J.J."/>
            <person name="Lee N.A."/>
        </authorList>
    </citation>
    <scope>NUCLEOTIDE SEQUENCE [MRNA]</scope>
    <source>
        <strain>C57BL/6J</strain>
        <tissue>Bone marrow</tissue>
    </source>
</reference>
<reference key="3">
    <citation type="journal article" date="2009" name="PLoS Biol.">
        <title>Lineage-specific biology revealed by a finished genome assembly of the mouse.</title>
        <authorList>
            <person name="Church D.M."/>
            <person name="Goodstadt L."/>
            <person name="Hillier L.W."/>
            <person name="Zody M.C."/>
            <person name="Goldstein S."/>
            <person name="She X."/>
            <person name="Bult C.J."/>
            <person name="Agarwala R."/>
            <person name="Cherry J.L."/>
            <person name="DiCuccio M."/>
            <person name="Hlavina W."/>
            <person name="Kapustin Y."/>
            <person name="Meric P."/>
            <person name="Maglott D."/>
            <person name="Birtle Z."/>
            <person name="Marques A.C."/>
            <person name="Graves T."/>
            <person name="Zhou S."/>
            <person name="Teague B."/>
            <person name="Potamousis K."/>
            <person name="Churas C."/>
            <person name="Place M."/>
            <person name="Herschleb J."/>
            <person name="Runnheim R."/>
            <person name="Forrest D."/>
            <person name="Amos-Landgraf J."/>
            <person name="Schwartz D.C."/>
            <person name="Cheng Z."/>
            <person name="Lindblad-Toh K."/>
            <person name="Eichler E.E."/>
            <person name="Ponting C.P."/>
        </authorList>
    </citation>
    <scope>NUCLEOTIDE SEQUENCE [LARGE SCALE GENOMIC DNA]</scope>
    <source>
        <strain>C57BL/6J</strain>
    </source>
</reference>
<reference key="4">
    <citation type="journal article" date="2008" name="J. Biol. Chem.">
        <title>Post-translational tyrosine nitration of eosinophil granule toxins mediated by eosinophil peroxidase.</title>
        <authorList>
            <person name="Ulrich M."/>
            <person name="Petre A."/>
            <person name="Youhnovski N."/>
            <person name="Proemm F."/>
            <person name="Schirle M."/>
            <person name="Schumm M."/>
            <person name="Pero R.S."/>
            <person name="Doyle A."/>
            <person name="Checkel J."/>
            <person name="Kita H."/>
            <person name="Thiyagarajan N."/>
            <person name="Acharya K.R."/>
            <person name="Schmid-Grendelmeier P."/>
            <person name="Simon H.-U."/>
            <person name="Schwarz H."/>
            <person name="Tsutsui M."/>
            <person name="Shimokawa H."/>
            <person name="Bellon G."/>
            <person name="Lee J.J."/>
            <person name="Przybylski M."/>
            <person name="Doering G."/>
        </authorList>
    </citation>
    <scope>FUNCTION</scope>
    <scope>NITRATION</scope>
</reference>
<reference key="5">
    <citation type="journal article" date="2010" name="Cell">
        <title>A tissue-specific atlas of mouse protein phosphorylation and expression.</title>
        <authorList>
            <person name="Huttlin E.L."/>
            <person name="Jedrychowski M.P."/>
            <person name="Elias J.E."/>
            <person name="Goswami T."/>
            <person name="Rad R."/>
            <person name="Beausoleil S.A."/>
            <person name="Villen J."/>
            <person name="Haas W."/>
            <person name="Sowa M.E."/>
            <person name="Gygi S.P."/>
        </authorList>
    </citation>
    <scope>IDENTIFICATION BY MASS SPECTROMETRY [LARGE SCALE ANALYSIS]</scope>
    <source>
        <tissue>Spleen</tissue>
    </source>
</reference>
<comment type="function">
    <text evidence="1 5">Mediates tyrosine nitration of secondary granule proteins in mature resting eosinophils.</text>
</comment>
<comment type="catalytic activity">
    <reaction>
        <text>2 a phenolic donor + H2O2 = 2 a phenolic radical donor + 2 H2O</text>
        <dbReference type="Rhea" id="RHEA:56136"/>
        <dbReference type="ChEBI" id="CHEBI:15377"/>
        <dbReference type="ChEBI" id="CHEBI:16240"/>
        <dbReference type="ChEBI" id="CHEBI:139520"/>
        <dbReference type="ChEBI" id="CHEBI:139521"/>
        <dbReference type="EC" id="1.11.1.7"/>
    </reaction>
</comment>
<comment type="cofactor">
    <cofactor evidence="4">
        <name>Ca(2+)</name>
        <dbReference type="ChEBI" id="CHEBI:29108"/>
    </cofactor>
    <text evidence="4">Binds 1 Ca(2+) ion per heterodimer.</text>
</comment>
<comment type="cofactor">
    <cofactor evidence="4">
        <name>heme b</name>
        <dbReference type="ChEBI" id="CHEBI:60344"/>
    </cofactor>
    <text evidence="4">Binds 1 heme b (iron(II)-protoporphyrin IX) group covalently per heterodimer.</text>
</comment>
<comment type="subunit">
    <text evidence="1">Tetramer of two light chains and two heavy chains.</text>
</comment>
<comment type="subcellular location">
    <subcellularLocation>
        <location>Cytoplasmic granule</location>
    </subcellularLocation>
    <text>Cytoplasmic granules of eosinophils.</text>
</comment>
<comment type="similarity">
    <text evidence="4">Belongs to the peroxidase family. XPO subfamily.</text>
</comment>
<comment type="sequence caution" evidence="6">
    <conflict type="erroneous initiation">
        <sequence resource="EMBL-CDS" id="AAB40403"/>
    </conflict>
</comment>